<reference key="1">
    <citation type="submission" date="2007-05" db="EMBL/GenBank/DDBJ databases">
        <title>Complete sequence of Thermotoga petrophila RKU-1.</title>
        <authorList>
            <consortium name="US DOE Joint Genome Institute"/>
            <person name="Copeland A."/>
            <person name="Lucas S."/>
            <person name="Lapidus A."/>
            <person name="Barry K."/>
            <person name="Glavina del Rio T."/>
            <person name="Dalin E."/>
            <person name="Tice H."/>
            <person name="Pitluck S."/>
            <person name="Sims D."/>
            <person name="Brettin T."/>
            <person name="Bruce D."/>
            <person name="Detter J.C."/>
            <person name="Han C."/>
            <person name="Tapia R."/>
            <person name="Schmutz J."/>
            <person name="Larimer F."/>
            <person name="Land M."/>
            <person name="Hauser L."/>
            <person name="Kyrpides N."/>
            <person name="Mikhailova N."/>
            <person name="Nelson K."/>
            <person name="Gogarten J.P."/>
            <person name="Noll K."/>
            <person name="Richardson P."/>
        </authorList>
    </citation>
    <scope>NUCLEOTIDE SEQUENCE [LARGE SCALE GENOMIC DNA]</scope>
    <source>
        <strain>ATCC BAA-488 / DSM 13995 / JCM 10881 / RKU-1</strain>
    </source>
</reference>
<protein>
    <recommendedName>
        <fullName evidence="1">UPF0313 protein Tpet_0582</fullName>
    </recommendedName>
</protein>
<proteinExistence type="inferred from homology"/>
<keyword id="KW-0004">4Fe-4S</keyword>
<keyword id="KW-0408">Iron</keyword>
<keyword id="KW-0411">Iron-sulfur</keyword>
<keyword id="KW-0479">Metal-binding</keyword>
<keyword id="KW-0949">S-adenosyl-L-methionine</keyword>
<organism>
    <name type="scientific">Thermotoga petrophila (strain ATCC BAA-488 / DSM 13995 / JCM 10881 / RKU-1)</name>
    <dbReference type="NCBI Taxonomy" id="390874"/>
    <lineage>
        <taxon>Bacteria</taxon>
        <taxon>Thermotogati</taxon>
        <taxon>Thermotogota</taxon>
        <taxon>Thermotogae</taxon>
        <taxon>Thermotogales</taxon>
        <taxon>Thermotogaceae</taxon>
        <taxon>Thermotoga</taxon>
    </lineage>
</organism>
<name>Y582_THEP1</name>
<gene>
    <name type="ordered locus">Tpet_0582</name>
</gene>
<accession>A5IK80</accession>
<comment type="cofactor">
    <cofactor evidence="1">
        <name>[4Fe-4S] cluster</name>
        <dbReference type="ChEBI" id="CHEBI:49883"/>
    </cofactor>
    <text evidence="1">Binds 1 [4Fe-4S] cluster. The cluster is coordinated with 3 cysteines and an exchangeable S-adenosyl-L-methionine.</text>
</comment>
<comment type="similarity">
    <text evidence="1">Belongs to the UPF0313 family.</text>
</comment>
<sequence>MFLPTTREEMKKLGWRELDVILVTGDAYVDHPSFGVALIGHYLVSHGFKVGIIAQPDWRTEKDITRLGRPRLFFGVTAGNVDSMVANYTASKKKRKTDDYTPGGSGGKRPDRATIVYTNLIKRFFPEVPVVLGGLEASLRRFAHYDWWSEKVRKSILIDSKVDLLVYGMGEKAVLEIAQILSRTGDIEKCKSVRGVVWWSSQKPEGGIELPSYDEISENPEKYAEALKLQTWYTDPYKNILIYQKQDTRYVVQNPPQLPLSQEELDRLYLLPFEREVHPFYAKMGRVKAIETVKFSITAVRGCFGSCSFCALTQHQTTHVSYRSKDSILEEVRILTKKKDFKGTITDVGGPTANLYGSSCSIRETKGQCQKFCLYPSVCKIVRPNHDEFISLLESIRKIPGVRNVFVSSGIRHDFVLAEKDPDVFIRELVKYTPGQLKLAPEHAHPKVLSLMRKPPVELFLEFKRRFETLAKKIGKRKYVIGYFIVGHPGEGWRENNYLRDFILKHLGYFPQQIQIFTPTPGTVSTAMYYSGLDPFTGEKVHVERSLKVRNKMKENVLFKKKGREKR</sequence>
<feature type="chain" id="PRO_1000067196" description="UPF0313 protein Tpet_0582">
    <location>
        <begin position="1"/>
        <end position="567"/>
    </location>
</feature>
<feature type="domain" description="Radical SAM core" evidence="2">
    <location>
        <begin position="288"/>
        <end position="560"/>
    </location>
</feature>
<feature type="binding site" evidence="1">
    <location>
        <position position="303"/>
    </location>
    <ligand>
        <name>[4Fe-4S] cluster</name>
        <dbReference type="ChEBI" id="CHEBI:49883"/>
        <note>4Fe-4S-S-AdoMet</note>
    </ligand>
</feature>
<feature type="binding site" evidence="1">
    <location>
        <position position="307"/>
    </location>
    <ligand>
        <name>[4Fe-4S] cluster</name>
        <dbReference type="ChEBI" id="CHEBI:49883"/>
        <note>4Fe-4S-S-AdoMet</note>
    </ligand>
</feature>
<feature type="binding site" evidence="1">
    <location>
        <position position="310"/>
    </location>
    <ligand>
        <name>[4Fe-4S] cluster</name>
        <dbReference type="ChEBI" id="CHEBI:49883"/>
        <note>4Fe-4S-S-AdoMet</note>
    </ligand>
</feature>
<evidence type="ECO:0000255" key="1">
    <source>
        <dbReference type="HAMAP-Rule" id="MF_01251"/>
    </source>
</evidence>
<evidence type="ECO:0000255" key="2">
    <source>
        <dbReference type="PROSITE-ProRule" id="PRU01266"/>
    </source>
</evidence>
<dbReference type="EMBL" id="CP000702">
    <property type="protein sequence ID" value="ABQ46603.1"/>
    <property type="molecule type" value="Genomic_DNA"/>
</dbReference>
<dbReference type="RefSeq" id="WP_011943201.1">
    <property type="nucleotide sequence ID" value="NC_009486.1"/>
</dbReference>
<dbReference type="STRING" id="390874.Tpet_0582"/>
<dbReference type="KEGG" id="tpt:Tpet_0582"/>
<dbReference type="eggNOG" id="COG1032">
    <property type="taxonomic scope" value="Bacteria"/>
</dbReference>
<dbReference type="HOGENOM" id="CLU_018288_2_0_0"/>
<dbReference type="Proteomes" id="UP000006558">
    <property type="component" value="Chromosome"/>
</dbReference>
<dbReference type="GO" id="GO:0051539">
    <property type="term" value="F:4 iron, 4 sulfur cluster binding"/>
    <property type="evidence" value="ECO:0007669"/>
    <property type="project" value="UniProtKB-KW"/>
</dbReference>
<dbReference type="GO" id="GO:0003824">
    <property type="term" value="F:catalytic activity"/>
    <property type="evidence" value="ECO:0007669"/>
    <property type="project" value="InterPro"/>
</dbReference>
<dbReference type="GO" id="GO:0005506">
    <property type="term" value="F:iron ion binding"/>
    <property type="evidence" value="ECO:0007669"/>
    <property type="project" value="UniProtKB-UniRule"/>
</dbReference>
<dbReference type="Gene3D" id="3.80.30.20">
    <property type="entry name" value="tm_1862 like domain"/>
    <property type="match status" value="1"/>
</dbReference>
<dbReference type="HAMAP" id="MF_01251">
    <property type="entry name" value="UPF0313"/>
    <property type="match status" value="1"/>
</dbReference>
<dbReference type="InterPro" id="IPR006638">
    <property type="entry name" value="Elp3/MiaA/NifB-like_rSAM"/>
</dbReference>
<dbReference type="InterPro" id="IPR007197">
    <property type="entry name" value="rSAM"/>
</dbReference>
<dbReference type="InterPro" id="IPR023404">
    <property type="entry name" value="rSAM_horseshoe"/>
</dbReference>
<dbReference type="InterPro" id="IPR022946">
    <property type="entry name" value="UPF0313"/>
</dbReference>
<dbReference type="InterPro" id="IPR024560">
    <property type="entry name" value="UPF0313_C"/>
</dbReference>
<dbReference type="InterPro" id="IPR013704">
    <property type="entry name" value="UPF0313_N"/>
</dbReference>
<dbReference type="NCBIfam" id="TIGR03904">
    <property type="entry name" value="SAM_YgiQ"/>
    <property type="match status" value="1"/>
</dbReference>
<dbReference type="PANTHER" id="PTHR32331">
    <property type="entry name" value="UPF0313 PROTEIN YGIQ"/>
    <property type="match status" value="1"/>
</dbReference>
<dbReference type="PANTHER" id="PTHR32331:SF0">
    <property type="entry name" value="UPF0313 PROTEIN YGIQ"/>
    <property type="match status" value="1"/>
</dbReference>
<dbReference type="Pfam" id="PF11842">
    <property type="entry name" value="DUF3362"/>
    <property type="match status" value="1"/>
</dbReference>
<dbReference type="Pfam" id="PF04055">
    <property type="entry name" value="Radical_SAM"/>
    <property type="match status" value="1"/>
</dbReference>
<dbReference type="Pfam" id="PF08497">
    <property type="entry name" value="Radical_SAM_N"/>
    <property type="match status" value="1"/>
</dbReference>
<dbReference type="SFLD" id="SFLDG01082">
    <property type="entry name" value="B12-binding_domain_containing"/>
    <property type="match status" value="1"/>
</dbReference>
<dbReference type="SFLD" id="SFLDS00029">
    <property type="entry name" value="Radical_SAM"/>
    <property type="match status" value="1"/>
</dbReference>
<dbReference type="SFLD" id="SFLDG01069">
    <property type="entry name" value="UPF0313"/>
    <property type="match status" value="1"/>
</dbReference>
<dbReference type="SMART" id="SM00729">
    <property type="entry name" value="Elp3"/>
    <property type="match status" value="1"/>
</dbReference>
<dbReference type="SUPFAM" id="SSF102114">
    <property type="entry name" value="Radical SAM enzymes"/>
    <property type="match status" value="1"/>
</dbReference>
<dbReference type="PROSITE" id="PS51918">
    <property type="entry name" value="RADICAL_SAM"/>
    <property type="match status" value="1"/>
</dbReference>